<sequence>MDALRLPRRLGVLLWKVVLLFVYAEDCRAQCGKDCRAYCCNGSTPHCCSYYAYIGSILSGTAIAGIVFGIVFIMGVIAGIAICICMCMKNNRGTRVGVIRAAHINAISYPMAPPPYTYDHETEYCTDLPPPYSPAPQASAQRSPPPPYPGNSRKYSSSQNRICNN</sequence>
<feature type="signal peptide" evidence="1">
    <location>
        <begin position="1"/>
        <end position="29"/>
    </location>
</feature>
<feature type="chain" id="PRO_0000341300" description="Cysteine and tyrosine-rich protein 1">
    <location>
        <begin position="30"/>
        <end position="165"/>
    </location>
</feature>
<feature type="topological domain" description="Extracellular" evidence="1">
    <location>
        <begin position="30"/>
        <end position="61"/>
    </location>
</feature>
<feature type="transmembrane region" description="Helical" evidence="1">
    <location>
        <begin position="62"/>
        <end position="82"/>
    </location>
</feature>
<feature type="topological domain" description="Cytoplasmic" evidence="1">
    <location>
        <begin position="83"/>
        <end position="165"/>
    </location>
</feature>
<feature type="region of interest" description="Disordered" evidence="2">
    <location>
        <begin position="127"/>
        <end position="165"/>
    </location>
</feature>
<feature type="compositionally biased region" description="Polar residues" evidence="2">
    <location>
        <begin position="153"/>
        <end position="165"/>
    </location>
</feature>
<name>CYYR1_RAT</name>
<accession>Q5PQS5</accession>
<comment type="subcellular location">
    <subcellularLocation>
        <location evidence="3">Membrane</location>
        <topology evidence="3">Single-pass type I membrane protein</topology>
    </subcellularLocation>
</comment>
<comment type="similarity">
    <text evidence="3">Belongs to the CYYR1 family.</text>
</comment>
<organism>
    <name type="scientific">Rattus norvegicus</name>
    <name type="common">Rat</name>
    <dbReference type="NCBI Taxonomy" id="10116"/>
    <lineage>
        <taxon>Eukaryota</taxon>
        <taxon>Metazoa</taxon>
        <taxon>Chordata</taxon>
        <taxon>Craniata</taxon>
        <taxon>Vertebrata</taxon>
        <taxon>Euteleostomi</taxon>
        <taxon>Mammalia</taxon>
        <taxon>Eutheria</taxon>
        <taxon>Euarchontoglires</taxon>
        <taxon>Glires</taxon>
        <taxon>Rodentia</taxon>
        <taxon>Myomorpha</taxon>
        <taxon>Muroidea</taxon>
        <taxon>Muridae</taxon>
        <taxon>Murinae</taxon>
        <taxon>Rattus</taxon>
    </lineage>
</organism>
<dbReference type="EMBL" id="BC087052">
    <property type="protein sequence ID" value="AAH87052.1"/>
    <property type="molecule type" value="mRNA"/>
</dbReference>
<dbReference type="RefSeq" id="NP_001014002.1">
    <property type="nucleotide sequence ID" value="NM_001013980.1"/>
</dbReference>
<dbReference type="FunCoup" id="Q5PQS5">
    <property type="interactions" value="68"/>
</dbReference>
<dbReference type="STRING" id="10116.ENSRNOP00000002109"/>
<dbReference type="PhosphoSitePlus" id="Q5PQS5"/>
<dbReference type="PaxDb" id="10116-ENSRNOP00000002109"/>
<dbReference type="Ensembl" id="ENSRNOT00000002109.8">
    <property type="protein sequence ID" value="ENSRNOP00000002109.5"/>
    <property type="gene ID" value="ENSRNOG00000001544.8"/>
</dbReference>
<dbReference type="GeneID" id="304138"/>
<dbReference type="KEGG" id="rno:304138"/>
<dbReference type="UCSC" id="RGD:1359578">
    <property type="organism name" value="rat"/>
</dbReference>
<dbReference type="AGR" id="RGD:1359578"/>
<dbReference type="CTD" id="116159"/>
<dbReference type="RGD" id="1359578">
    <property type="gene designation" value="Cyyr1"/>
</dbReference>
<dbReference type="eggNOG" id="ENOG502S121">
    <property type="taxonomic scope" value="Eukaryota"/>
</dbReference>
<dbReference type="GeneTree" id="ENSGT00500000044986"/>
<dbReference type="HOGENOM" id="CLU_143594_0_0_1"/>
<dbReference type="InParanoid" id="Q5PQS5"/>
<dbReference type="OMA" id="YSYDYEM"/>
<dbReference type="OrthoDB" id="88589at9989"/>
<dbReference type="PhylomeDB" id="Q5PQS5"/>
<dbReference type="TreeFam" id="TF332064"/>
<dbReference type="PRO" id="PR:Q5PQS5"/>
<dbReference type="Proteomes" id="UP000002494">
    <property type="component" value="Chromosome 11"/>
</dbReference>
<dbReference type="Bgee" id="ENSRNOG00000001544">
    <property type="expression patterns" value="Expressed in lung and 18 other cell types or tissues"/>
</dbReference>
<dbReference type="GO" id="GO:0016020">
    <property type="term" value="C:membrane"/>
    <property type="evidence" value="ECO:0007669"/>
    <property type="project" value="UniProtKB-SubCell"/>
</dbReference>
<dbReference type="InterPro" id="IPR022640">
    <property type="entry name" value="CYYR1"/>
</dbReference>
<dbReference type="PANTHER" id="PTHR38490">
    <property type="entry name" value="CYSTEINE AND TYROSINE-RICH PROTEIN 1"/>
    <property type="match status" value="1"/>
</dbReference>
<dbReference type="PANTHER" id="PTHR38490:SF1">
    <property type="entry name" value="CYSTEINE AND TYROSINE-RICH PROTEIN 1"/>
    <property type="match status" value="1"/>
</dbReference>
<dbReference type="Pfam" id="PF10873">
    <property type="entry name" value="CYYR1"/>
    <property type="match status" value="1"/>
</dbReference>
<proteinExistence type="evidence at transcript level"/>
<gene>
    <name type="primary">Cyyr1</name>
</gene>
<keyword id="KW-0472">Membrane</keyword>
<keyword id="KW-1185">Reference proteome</keyword>
<keyword id="KW-0732">Signal</keyword>
<keyword id="KW-0812">Transmembrane</keyword>
<keyword id="KW-1133">Transmembrane helix</keyword>
<protein>
    <recommendedName>
        <fullName>Cysteine and tyrosine-rich protein 1</fullName>
    </recommendedName>
</protein>
<evidence type="ECO:0000255" key="1"/>
<evidence type="ECO:0000256" key="2">
    <source>
        <dbReference type="SAM" id="MobiDB-lite"/>
    </source>
</evidence>
<evidence type="ECO:0000305" key="3"/>
<reference key="1">
    <citation type="journal article" date="2004" name="Genome Res.">
        <title>The status, quality, and expansion of the NIH full-length cDNA project: the Mammalian Gene Collection (MGC).</title>
        <authorList>
            <consortium name="The MGC Project Team"/>
        </authorList>
    </citation>
    <scope>NUCLEOTIDE SEQUENCE [LARGE SCALE MRNA]</scope>
    <source>
        <tissue>Lung</tissue>
    </source>
</reference>